<sequence>MAQCVRRLVLAAPLAAVVALLLCTSSAPVARAAGTSDFTGAQQKNTLTVLQAFARAIPALGDTWTGSDFCSWEHIICYSSGVGVWMHNVDYTGTLPEMPASVDYKDVMILALDFGAMGQGLSGTLPPSWSSMKHLIVLDLEGTKVSGTLPPEWSEMTSAEALQLENCGLSGSLPTSWSSMPKLRIVSLSGNHFCGCVPDSWREKDRLDVTIEEWHMGEDCKLANACRPTAAPGTTTTNPPTTTGTPAASSTPSPGSGCEVDGCEVCEGDSAARCARCREGYSLTDEKTCLGEPRWRRGGGVERTAGCRCCVGGCAVERGAGGVRVRRAPLLCGAPGACPRPRHGVVAALSPPPADGETDSHTRTRTRRRASRVLSAVVAPARMHGHAEACMRVRVPALVCLSVWPAVGTRRRSNVRAAAVCRLGQRRCGARPSPCASVCVSWPRERRTECACPALFDGARLRCCALVVCAGAAPAG</sequence>
<comment type="subcellular location">
    <subcellularLocation>
        <location>Cell membrane</location>
        <topology>Lipid-anchor</topology>
        <topology>GPI-anchor</topology>
    </subcellularLocation>
</comment>
<protein>
    <recommendedName>
        <fullName>Surface membrane glycoprotein GP46/M-2</fullName>
    </recommendedName>
</protein>
<organism>
    <name type="scientific">Leishmania amazonensis</name>
    <dbReference type="NCBI Taxonomy" id="5659"/>
    <lineage>
        <taxon>Eukaryota</taxon>
        <taxon>Discoba</taxon>
        <taxon>Euglenozoa</taxon>
        <taxon>Kinetoplastea</taxon>
        <taxon>Metakinetoplastina</taxon>
        <taxon>Trypanosomatida</taxon>
        <taxon>Trypanosomatidae</taxon>
        <taxon>Leishmaniinae</taxon>
        <taxon>Leishmania</taxon>
    </lineage>
</organism>
<feature type="signal peptide" evidence="3">
    <location>
        <begin position="1"/>
        <end position="32"/>
    </location>
</feature>
<feature type="chain" id="PRO_0000021354" description="Surface membrane glycoprotein GP46/M-2">
    <location>
        <begin position="33"/>
        <end position="452"/>
    </location>
</feature>
<feature type="propeptide" id="PRO_0000021355" description="Removed in mature form" evidence="1">
    <location>
        <begin position="453"/>
        <end position="476"/>
    </location>
</feature>
<feature type="repeat" description="1">
    <location>
        <begin position="107"/>
        <end position="130"/>
    </location>
</feature>
<feature type="repeat" description="2">
    <location>
        <begin position="131"/>
        <end position="154"/>
    </location>
</feature>
<feature type="repeat" description="3">
    <location>
        <begin position="155"/>
        <end position="178"/>
    </location>
</feature>
<feature type="repeat" description="4">
    <location>
        <begin position="179"/>
        <end position="202"/>
    </location>
</feature>
<feature type="region of interest" description="4 X 24 AA tandem repeats">
    <location>
        <begin position="107"/>
        <end position="202"/>
    </location>
</feature>
<feature type="region of interest" description="Disordered" evidence="2">
    <location>
        <begin position="231"/>
        <end position="255"/>
    </location>
</feature>
<feature type="region of interest" description="Disordered" evidence="2">
    <location>
        <begin position="348"/>
        <end position="370"/>
    </location>
</feature>
<feature type="lipid moiety-binding region" description="GPI-anchor amidated cysteine" evidence="1">
    <location>
        <position position="452"/>
    </location>
</feature>
<feature type="sequence conflict" description="In Ref. 1; AA sequence." evidence="4" ref="1">
    <original>G</original>
    <variation>E</variation>
    <location>
        <position position="40"/>
    </location>
</feature>
<feature type="sequence conflict" description="In Ref. 1; AA sequence." evidence="4" ref="1">
    <original>K</original>
    <variation>T</variation>
    <location>
        <position position="44"/>
    </location>
</feature>
<keyword id="KW-1003">Cell membrane</keyword>
<keyword id="KW-0903">Direct protein sequencing</keyword>
<keyword id="KW-0325">Glycoprotein</keyword>
<keyword id="KW-0336">GPI-anchor</keyword>
<keyword id="KW-0449">Lipoprotein</keyword>
<keyword id="KW-0472">Membrane</keyword>
<keyword id="KW-0677">Repeat</keyword>
<keyword id="KW-0732">Signal</keyword>
<dbReference type="EMBL" id="M38368">
    <property type="protein sequence ID" value="AAA29234.1"/>
    <property type="molecule type" value="Genomic_DNA"/>
</dbReference>
<dbReference type="PIR" id="A36478">
    <property type="entry name" value="A36478"/>
</dbReference>
<dbReference type="SMR" id="P21978"/>
<dbReference type="VEuPathDB" id="TriTrypDB:LAMA_000409600"/>
<dbReference type="VEuPathDB" id="TriTrypDB:LAMAPH8_000876400"/>
<dbReference type="GO" id="GO:0005886">
    <property type="term" value="C:plasma membrane"/>
    <property type="evidence" value="ECO:0007669"/>
    <property type="project" value="UniProtKB-SubCell"/>
</dbReference>
<dbReference type="GO" id="GO:0098552">
    <property type="term" value="C:side of membrane"/>
    <property type="evidence" value="ECO:0007669"/>
    <property type="project" value="UniProtKB-KW"/>
</dbReference>
<dbReference type="Gene3D" id="3.80.10.10">
    <property type="entry name" value="Ribonuclease Inhibitor"/>
    <property type="match status" value="1"/>
</dbReference>
<dbReference type="InterPro" id="IPR032675">
    <property type="entry name" value="LRR_dom_sf"/>
</dbReference>
<dbReference type="InterPro" id="IPR006311">
    <property type="entry name" value="TAT_signal"/>
</dbReference>
<dbReference type="PANTHER" id="PTHR45974">
    <property type="entry name" value="RECEPTOR-LIKE PROTEIN 55"/>
    <property type="match status" value="1"/>
</dbReference>
<dbReference type="SUPFAM" id="SSF52058">
    <property type="entry name" value="L domain-like"/>
    <property type="match status" value="1"/>
</dbReference>
<evidence type="ECO:0000255" key="1"/>
<evidence type="ECO:0000256" key="2">
    <source>
        <dbReference type="SAM" id="MobiDB-lite"/>
    </source>
</evidence>
<evidence type="ECO:0000269" key="3">
    <source>
    </source>
</evidence>
<evidence type="ECO:0000305" key="4"/>
<reference key="1">
    <citation type="journal article" date="1990" name="Proc. Natl. Acad. Sci. U.S.A.">
        <title>Molecular cloning and characterization of the immunologically protective surface glycoprotein GP46/M-2 of Leishmania amazonensis.</title>
        <authorList>
            <person name="Lohman K.L."/>
            <person name="Langer P.J."/>
            <person name="McMahon-Pratt D."/>
        </authorList>
    </citation>
    <scope>NUCLEOTIDE SEQUENCE [GENOMIC DNA]</scope>
    <scope>PROTEIN SEQUENCE OF 33-61</scope>
    <source>
        <strain>MHOM/BR/77/LTB0016/C1S1</strain>
    </source>
</reference>
<name>GP46_LEIAM</name>
<proteinExistence type="evidence at protein level"/>
<accession>P21978</accession>